<proteinExistence type="inferred from homology"/>
<dbReference type="EC" id="2.5.1.6" evidence="1"/>
<dbReference type="EMBL" id="CP000680">
    <property type="protein sequence ID" value="ABP83224.1"/>
    <property type="molecule type" value="Genomic_DNA"/>
</dbReference>
<dbReference type="SMR" id="A4XPF8"/>
<dbReference type="STRING" id="399739.Pmen_0454"/>
<dbReference type="KEGG" id="pmy:Pmen_0454"/>
<dbReference type="PATRIC" id="fig|399739.8.peg.460"/>
<dbReference type="eggNOG" id="COG0192">
    <property type="taxonomic scope" value="Bacteria"/>
</dbReference>
<dbReference type="HOGENOM" id="CLU_041802_1_1_6"/>
<dbReference type="OrthoDB" id="9801686at2"/>
<dbReference type="UniPathway" id="UPA00315">
    <property type="reaction ID" value="UER00080"/>
</dbReference>
<dbReference type="GO" id="GO:0005737">
    <property type="term" value="C:cytoplasm"/>
    <property type="evidence" value="ECO:0007669"/>
    <property type="project" value="UniProtKB-SubCell"/>
</dbReference>
<dbReference type="GO" id="GO:0005524">
    <property type="term" value="F:ATP binding"/>
    <property type="evidence" value="ECO:0007669"/>
    <property type="project" value="UniProtKB-UniRule"/>
</dbReference>
<dbReference type="GO" id="GO:0000287">
    <property type="term" value="F:magnesium ion binding"/>
    <property type="evidence" value="ECO:0007669"/>
    <property type="project" value="UniProtKB-UniRule"/>
</dbReference>
<dbReference type="GO" id="GO:0004478">
    <property type="term" value="F:methionine adenosyltransferase activity"/>
    <property type="evidence" value="ECO:0007669"/>
    <property type="project" value="UniProtKB-UniRule"/>
</dbReference>
<dbReference type="GO" id="GO:0006730">
    <property type="term" value="P:one-carbon metabolic process"/>
    <property type="evidence" value="ECO:0007669"/>
    <property type="project" value="UniProtKB-KW"/>
</dbReference>
<dbReference type="GO" id="GO:0006556">
    <property type="term" value="P:S-adenosylmethionine biosynthetic process"/>
    <property type="evidence" value="ECO:0007669"/>
    <property type="project" value="UniProtKB-UniRule"/>
</dbReference>
<dbReference type="CDD" id="cd18079">
    <property type="entry name" value="S-AdoMet_synt"/>
    <property type="match status" value="1"/>
</dbReference>
<dbReference type="FunFam" id="3.30.300.10:FF:000003">
    <property type="entry name" value="S-adenosylmethionine synthase"/>
    <property type="match status" value="1"/>
</dbReference>
<dbReference type="Gene3D" id="3.30.300.10">
    <property type="match status" value="3"/>
</dbReference>
<dbReference type="HAMAP" id="MF_00086">
    <property type="entry name" value="S_AdoMet_synth1"/>
    <property type="match status" value="1"/>
</dbReference>
<dbReference type="InterPro" id="IPR022631">
    <property type="entry name" value="ADOMET_SYNTHASE_CS"/>
</dbReference>
<dbReference type="InterPro" id="IPR022630">
    <property type="entry name" value="S-AdoMet_synt_C"/>
</dbReference>
<dbReference type="InterPro" id="IPR022629">
    <property type="entry name" value="S-AdoMet_synt_central"/>
</dbReference>
<dbReference type="InterPro" id="IPR022628">
    <property type="entry name" value="S-AdoMet_synt_N"/>
</dbReference>
<dbReference type="InterPro" id="IPR002133">
    <property type="entry name" value="S-AdoMet_synthetase"/>
</dbReference>
<dbReference type="InterPro" id="IPR022636">
    <property type="entry name" value="S-AdoMet_synthetase_sfam"/>
</dbReference>
<dbReference type="NCBIfam" id="TIGR01034">
    <property type="entry name" value="metK"/>
    <property type="match status" value="1"/>
</dbReference>
<dbReference type="PANTHER" id="PTHR11964">
    <property type="entry name" value="S-ADENOSYLMETHIONINE SYNTHETASE"/>
    <property type="match status" value="1"/>
</dbReference>
<dbReference type="Pfam" id="PF02773">
    <property type="entry name" value="S-AdoMet_synt_C"/>
    <property type="match status" value="1"/>
</dbReference>
<dbReference type="Pfam" id="PF02772">
    <property type="entry name" value="S-AdoMet_synt_M"/>
    <property type="match status" value="1"/>
</dbReference>
<dbReference type="Pfam" id="PF00438">
    <property type="entry name" value="S-AdoMet_synt_N"/>
    <property type="match status" value="1"/>
</dbReference>
<dbReference type="PIRSF" id="PIRSF000497">
    <property type="entry name" value="MAT"/>
    <property type="match status" value="1"/>
</dbReference>
<dbReference type="SUPFAM" id="SSF55973">
    <property type="entry name" value="S-adenosylmethionine synthetase"/>
    <property type="match status" value="3"/>
</dbReference>
<dbReference type="PROSITE" id="PS00376">
    <property type="entry name" value="ADOMET_SYNTHASE_1"/>
    <property type="match status" value="1"/>
</dbReference>
<dbReference type="PROSITE" id="PS00377">
    <property type="entry name" value="ADOMET_SYNTHASE_2"/>
    <property type="match status" value="1"/>
</dbReference>
<reference key="1">
    <citation type="submission" date="2007-04" db="EMBL/GenBank/DDBJ databases">
        <title>Complete sequence of Pseudomonas mendocina ymp.</title>
        <authorList>
            <consortium name="US DOE Joint Genome Institute"/>
            <person name="Copeland A."/>
            <person name="Lucas S."/>
            <person name="Lapidus A."/>
            <person name="Barry K."/>
            <person name="Glavina del Rio T."/>
            <person name="Dalin E."/>
            <person name="Tice H."/>
            <person name="Pitluck S."/>
            <person name="Kiss H."/>
            <person name="Brettin T."/>
            <person name="Detter J.C."/>
            <person name="Bruce D."/>
            <person name="Han C."/>
            <person name="Schmutz J."/>
            <person name="Larimer F."/>
            <person name="Land M."/>
            <person name="Hauser L."/>
            <person name="Kyrpides N."/>
            <person name="Mikhailova N."/>
            <person name="Hersman L."/>
            <person name="Dubois J."/>
            <person name="Maurice P."/>
            <person name="Richardson P."/>
        </authorList>
    </citation>
    <scope>NUCLEOTIDE SEQUENCE [LARGE SCALE GENOMIC DNA]</scope>
    <source>
        <strain>ymp</strain>
    </source>
</reference>
<evidence type="ECO:0000255" key="1">
    <source>
        <dbReference type="HAMAP-Rule" id="MF_00086"/>
    </source>
</evidence>
<accession>A4XPF8</accession>
<comment type="function">
    <text evidence="1">Catalyzes the formation of S-adenosylmethionine (AdoMet) from methionine and ATP. The overall synthetic reaction is composed of two sequential steps, AdoMet formation and the subsequent tripolyphosphate hydrolysis which occurs prior to release of AdoMet from the enzyme.</text>
</comment>
<comment type="catalytic activity">
    <reaction evidence="1">
        <text>L-methionine + ATP + H2O = S-adenosyl-L-methionine + phosphate + diphosphate</text>
        <dbReference type="Rhea" id="RHEA:21080"/>
        <dbReference type="ChEBI" id="CHEBI:15377"/>
        <dbReference type="ChEBI" id="CHEBI:30616"/>
        <dbReference type="ChEBI" id="CHEBI:33019"/>
        <dbReference type="ChEBI" id="CHEBI:43474"/>
        <dbReference type="ChEBI" id="CHEBI:57844"/>
        <dbReference type="ChEBI" id="CHEBI:59789"/>
        <dbReference type="EC" id="2.5.1.6"/>
    </reaction>
</comment>
<comment type="cofactor">
    <cofactor evidence="1">
        <name>Mg(2+)</name>
        <dbReference type="ChEBI" id="CHEBI:18420"/>
    </cofactor>
    <text evidence="1">Binds 2 divalent ions per subunit.</text>
</comment>
<comment type="cofactor">
    <cofactor evidence="1">
        <name>K(+)</name>
        <dbReference type="ChEBI" id="CHEBI:29103"/>
    </cofactor>
    <text evidence="1">Binds 1 potassium ion per subunit.</text>
</comment>
<comment type="pathway">
    <text evidence="1">Amino-acid biosynthesis; S-adenosyl-L-methionine biosynthesis; S-adenosyl-L-methionine from L-methionine: step 1/1.</text>
</comment>
<comment type="subunit">
    <text evidence="1">Homotetramer; dimer of dimers.</text>
</comment>
<comment type="subcellular location">
    <subcellularLocation>
        <location evidence="1">Cytoplasm</location>
    </subcellularLocation>
</comment>
<comment type="similarity">
    <text evidence="1">Belongs to the AdoMet synthase family.</text>
</comment>
<organism>
    <name type="scientific">Ectopseudomonas mendocina (strain ymp)</name>
    <name type="common">Pseudomonas mendocina</name>
    <dbReference type="NCBI Taxonomy" id="399739"/>
    <lineage>
        <taxon>Bacteria</taxon>
        <taxon>Pseudomonadati</taxon>
        <taxon>Pseudomonadota</taxon>
        <taxon>Gammaproteobacteria</taxon>
        <taxon>Pseudomonadales</taxon>
        <taxon>Pseudomonadaceae</taxon>
        <taxon>Ectopseudomonas</taxon>
    </lineage>
</organism>
<gene>
    <name evidence="1" type="primary">metK</name>
    <name type="ordered locus">Pmen_0454</name>
</gene>
<keyword id="KW-0067">ATP-binding</keyword>
<keyword id="KW-0963">Cytoplasm</keyword>
<keyword id="KW-0460">Magnesium</keyword>
<keyword id="KW-0479">Metal-binding</keyword>
<keyword id="KW-0547">Nucleotide-binding</keyword>
<keyword id="KW-0554">One-carbon metabolism</keyword>
<keyword id="KW-0630">Potassium</keyword>
<keyword id="KW-0808">Transferase</keyword>
<name>METK_ECTM1</name>
<protein>
    <recommendedName>
        <fullName evidence="1">S-adenosylmethionine synthase</fullName>
        <shortName evidence="1">AdoMet synthase</shortName>
        <ecNumber evidence="1">2.5.1.6</ecNumber>
    </recommendedName>
    <alternativeName>
        <fullName evidence="1">MAT</fullName>
    </alternativeName>
    <alternativeName>
        <fullName evidence="1">Methionine adenosyltransferase</fullName>
    </alternativeName>
</protein>
<sequence>MSEYSLFTSESVSEGHPDKIADQISDAVLDAIIVQDKHARVAVETLVKTGVAIVAGEVTTSAWVDLEQIVRDVICNIGYTSSDVGFDGNTCGIINIIGKQSPDINQGVDRAKPEDQGAGDQGLMFGYASNETDVLMPAPIVLSHRLVERQAEARKSGLLPWLRPDAKSQVTCRYENGKVVGIDAVVLSTQHNPEISQADLQEAVMELIVKHTLPAELLHKDTQYHINPTGKFVIGGPVGDCGLTGRKIIVDSYGGMARHGGGAFSGKDPSKVDRSAAYAGRYVAKNIVAAGLAERCEIQVSYAIGVAQPTSISVNTFGTNKVSEETIIKLVREVFDLRPYAITRMLDLLHPMYQDTAAYGHFGRTPQQKTVGEDSFTTFTWERTDKAADLRAAAGL</sequence>
<feature type="chain" id="PRO_1000007950" description="S-adenosylmethionine synthase">
    <location>
        <begin position="1"/>
        <end position="396"/>
    </location>
</feature>
<feature type="region of interest" description="Flexible loop" evidence="1">
    <location>
        <begin position="100"/>
        <end position="110"/>
    </location>
</feature>
<feature type="binding site" description="in other chain" evidence="1">
    <location>
        <position position="16"/>
    </location>
    <ligand>
        <name>ATP</name>
        <dbReference type="ChEBI" id="CHEBI:30616"/>
        <note>ligand shared between two neighboring subunits</note>
    </ligand>
</feature>
<feature type="binding site" evidence="1">
    <location>
        <position position="18"/>
    </location>
    <ligand>
        <name>Mg(2+)</name>
        <dbReference type="ChEBI" id="CHEBI:18420"/>
    </ligand>
</feature>
<feature type="binding site" evidence="1">
    <location>
        <position position="44"/>
    </location>
    <ligand>
        <name>K(+)</name>
        <dbReference type="ChEBI" id="CHEBI:29103"/>
    </ligand>
</feature>
<feature type="binding site" description="in other chain" evidence="1">
    <location>
        <position position="57"/>
    </location>
    <ligand>
        <name>L-methionine</name>
        <dbReference type="ChEBI" id="CHEBI:57844"/>
        <note>ligand shared between two neighboring subunits</note>
    </ligand>
</feature>
<feature type="binding site" description="in other chain" evidence="1">
    <location>
        <position position="100"/>
    </location>
    <ligand>
        <name>L-methionine</name>
        <dbReference type="ChEBI" id="CHEBI:57844"/>
        <note>ligand shared between two neighboring subunits</note>
    </ligand>
</feature>
<feature type="binding site" description="in other chain" evidence="1">
    <location>
        <begin position="165"/>
        <end position="167"/>
    </location>
    <ligand>
        <name>ATP</name>
        <dbReference type="ChEBI" id="CHEBI:30616"/>
        <note>ligand shared between two neighboring subunits</note>
    </ligand>
</feature>
<feature type="binding site" description="in other chain" evidence="1">
    <location>
        <begin position="231"/>
        <end position="232"/>
    </location>
    <ligand>
        <name>ATP</name>
        <dbReference type="ChEBI" id="CHEBI:30616"/>
        <note>ligand shared between two neighboring subunits</note>
    </ligand>
</feature>
<feature type="binding site" evidence="1">
    <location>
        <position position="240"/>
    </location>
    <ligand>
        <name>ATP</name>
        <dbReference type="ChEBI" id="CHEBI:30616"/>
        <note>ligand shared between two neighboring subunits</note>
    </ligand>
</feature>
<feature type="binding site" evidence="1">
    <location>
        <position position="240"/>
    </location>
    <ligand>
        <name>L-methionine</name>
        <dbReference type="ChEBI" id="CHEBI:57844"/>
        <note>ligand shared between two neighboring subunits</note>
    </ligand>
</feature>
<feature type="binding site" description="in other chain" evidence="1">
    <location>
        <begin position="246"/>
        <end position="247"/>
    </location>
    <ligand>
        <name>ATP</name>
        <dbReference type="ChEBI" id="CHEBI:30616"/>
        <note>ligand shared between two neighboring subunits</note>
    </ligand>
</feature>
<feature type="binding site" evidence="1">
    <location>
        <position position="263"/>
    </location>
    <ligand>
        <name>ATP</name>
        <dbReference type="ChEBI" id="CHEBI:30616"/>
        <note>ligand shared between two neighboring subunits</note>
    </ligand>
</feature>
<feature type="binding site" evidence="1">
    <location>
        <position position="267"/>
    </location>
    <ligand>
        <name>ATP</name>
        <dbReference type="ChEBI" id="CHEBI:30616"/>
        <note>ligand shared between two neighboring subunits</note>
    </ligand>
</feature>
<feature type="binding site" description="in other chain" evidence="1">
    <location>
        <position position="271"/>
    </location>
    <ligand>
        <name>L-methionine</name>
        <dbReference type="ChEBI" id="CHEBI:57844"/>
        <note>ligand shared between two neighboring subunits</note>
    </ligand>
</feature>